<feature type="chain" id="PRO_0000376374" description="NADH-quinone oxidoreductase subunit B">
    <location>
        <begin position="1"/>
        <end position="213"/>
    </location>
</feature>
<feature type="binding site" evidence="1">
    <location>
        <position position="52"/>
    </location>
    <ligand>
        <name>[4Fe-4S] cluster</name>
        <dbReference type="ChEBI" id="CHEBI:49883"/>
    </ligand>
</feature>
<feature type="binding site" evidence="1">
    <location>
        <position position="53"/>
    </location>
    <ligand>
        <name>[4Fe-4S] cluster</name>
        <dbReference type="ChEBI" id="CHEBI:49883"/>
    </ligand>
</feature>
<feature type="binding site" evidence="1">
    <location>
        <position position="118"/>
    </location>
    <ligand>
        <name>[4Fe-4S] cluster</name>
        <dbReference type="ChEBI" id="CHEBI:49883"/>
    </ligand>
</feature>
<feature type="binding site" evidence="1">
    <location>
        <position position="147"/>
    </location>
    <ligand>
        <name>[4Fe-4S] cluster</name>
        <dbReference type="ChEBI" id="CHEBI:49883"/>
    </ligand>
</feature>
<evidence type="ECO:0000255" key="1">
    <source>
        <dbReference type="HAMAP-Rule" id="MF_01356"/>
    </source>
</evidence>
<reference key="1">
    <citation type="submission" date="2008-02" db="EMBL/GenBank/DDBJ databases">
        <title>Complete sequence of Shewanella woodyi ATCC 51908.</title>
        <authorList>
            <consortium name="US DOE Joint Genome Institute"/>
            <person name="Copeland A."/>
            <person name="Lucas S."/>
            <person name="Lapidus A."/>
            <person name="Glavina del Rio T."/>
            <person name="Dalin E."/>
            <person name="Tice H."/>
            <person name="Bruce D."/>
            <person name="Goodwin L."/>
            <person name="Pitluck S."/>
            <person name="Sims D."/>
            <person name="Brettin T."/>
            <person name="Detter J.C."/>
            <person name="Han C."/>
            <person name="Kuske C.R."/>
            <person name="Schmutz J."/>
            <person name="Larimer F."/>
            <person name="Land M."/>
            <person name="Hauser L."/>
            <person name="Kyrpides N."/>
            <person name="Lykidis A."/>
            <person name="Zhao J.-S."/>
            <person name="Richardson P."/>
        </authorList>
    </citation>
    <scope>NUCLEOTIDE SEQUENCE [LARGE SCALE GENOMIC DNA]</scope>
    <source>
        <strain>ATCC 51908 / MS32</strain>
    </source>
</reference>
<gene>
    <name evidence="1" type="primary">nuoB</name>
    <name type="ordered locus">Swoo_2861</name>
</gene>
<keyword id="KW-0004">4Fe-4S</keyword>
<keyword id="KW-0997">Cell inner membrane</keyword>
<keyword id="KW-1003">Cell membrane</keyword>
<keyword id="KW-0408">Iron</keyword>
<keyword id="KW-0411">Iron-sulfur</keyword>
<keyword id="KW-0472">Membrane</keyword>
<keyword id="KW-0479">Metal-binding</keyword>
<keyword id="KW-0520">NAD</keyword>
<keyword id="KW-0874">Quinone</keyword>
<keyword id="KW-1185">Reference proteome</keyword>
<keyword id="KW-1278">Translocase</keyword>
<keyword id="KW-0813">Transport</keyword>
<keyword id="KW-0830">Ubiquinone</keyword>
<name>NUOB_SHEWM</name>
<comment type="function">
    <text evidence="1">NDH-1 shuttles electrons from NADH, via FMN and iron-sulfur (Fe-S) centers, to quinones in the respiratory chain. The immediate electron acceptor for the enzyme in this species is believed to be ubiquinone. Couples the redox reaction to proton translocation (for every two electrons transferred, four hydrogen ions are translocated across the cytoplasmic membrane), and thus conserves the redox energy in a proton gradient.</text>
</comment>
<comment type="catalytic activity">
    <reaction evidence="1">
        <text>a quinone + NADH + 5 H(+)(in) = a quinol + NAD(+) + 4 H(+)(out)</text>
        <dbReference type="Rhea" id="RHEA:57888"/>
        <dbReference type="ChEBI" id="CHEBI:15378"/>
        <dbReference type="ChEBI" id="CHEBI:24646"/>
        <dbReference type="ChEBI" id="CHEBI:57540"/>
        <dbReference type="ChEBI" id="CHEBI:57945"/>
        <dbReference type="ChEBI" id="CHEBI:132124"/>
    </reaction>
</comment>
<comment type="cofactor">
    <cofactor evidence="1">
        <name>[4Fe-4S] cluster</name>
        <dbReference type="ChEBI" id="CHEBI:49883"/>
    </cofactor>
    <text evidence="1">Binds 1 [4Fe-4S] cluster.</text>
</comment>
<comment type="subunit">
    <text evidence="1">NDH-1 is composed of 13 different subunits. Subunits NuoB, CD, E, F, and G constitute the peripheral sector of the complex.</text>
</comment>
<comment type="subcellular location">
    <subcellularLocation>
        <location evidence="1">Cell inner membrane</location>
        <topology evidence="1">Peripheral membrane protein</topology>
        <orientation evidence="1">Cytoplasmic side</orientation>
    </subcellularLocation>
</comment>
<comment type="similarity">
    <text evidence="1">Belongs to the complex I 20 kDa subunit family.</text>
</comment>
<organism>
    <name type="scientific">Shewanella woodyi (strain ATCC 51908 / MS32)</name>
    <dbReference type="NCBI Taxonomy" id="392500"/>
    <lineage>
        <taxon>Bacteria</taxon>
        <taxon>Pseudomonadati</taxon>
        <taxon>Pseudomonadota</taxon>
        <taxon>Gammaproteobacteria</taxon>
        <taxon>Alteromonadales</taxon>
        <taxon>Shewanellaceae</taxon>
        <taxon>Shewanella</taxon>
    </lineage>
</organism>
<proteinExistence type="inferred from homology"/>
<sequence length="213" mass="24134">MRWQLSKPEIIPTSTQTMQEVVEKNLLVTRLEDLVAWGRSNSLWPFNFGLSCCYVEMATSFTSRHDIARFGSEVIRATPREADLIVISGTVFLKMAPVIKHLYDQMLEPKWVICMGSCANSGGMYDVYSVVQGADRFLPIDLYVPGCPPRPEALMYGLTLLQEAIKDGAPRQARPLNRTITPEEIQAFACRNMRDEKHEQRIKADKLTPPDEV</sequence>
<dbReference type="EC" id="7.1.1.-" evidence="1"/>
<dbReference type="EMBL" id="CP000961">
    <property type="protein sequence ID" value="ACA87136.1"/>
    <property type="molecule type" value="Genomic_DNA"/>
</dbReference>
<dbReference type="SMR" id="B1KJU9"/>
<dbReference type="STRING" id="392500.Swoo_2861"/>
<dbReference type="KEGG" id="swd:Swoo_2861"/>
<dbReference type="eggNOG" id="COG0377">
    <property type="taxonomic scope" value="Bacteria"/>
</dbReference>
<dbReference type="HOGENOM" id="CLU_055737_7_3_6"/>
<dbReference type="Proteomes" id="UP000002168">
    <property type="component" value="Chromosome"/>
</dbReference>
<dbReference type="GO" id="GO:0005886">
    <property type="term" value="C:plasma membrane"/>
    <property type="evidence" value="ECO:0007669"/>
    <property type="project" value="UniProtKB-SubCell"/>
</dbReference>
<dbReference type="GO" id="GO:0045271">
    <property type="term" value="C:respiratory chain complex I"/>
    <property type="evidence" value="ECO:0007669"/>
    <property type="project" value="TreeGrafter"/>
</dbReference>
<dbReference type="GO" id="GO:0051539">
    <property type="term" value="F:4 iron, 4 sulfur cluster binding"/>
    <property type="evidence" value="ECO:0007669"/>
    <property type="project" value="UniProtKB-KW"/>
</dbReference>
<dbReference type="GO" id="GO:0005506">
    <property type="term" value="F:iron ion binding"/>
    <property type="evidence" value="ECO:0007669"/>
    <property type="project" value="UniProtKB-UniRule"/>
</dbReference>
<dbReference type="GO" id="GO:0008137">
    <property type="term" value="F:NADH dehydrogenase (ubiquinone) activity"/>
    <property type="evidence" value="ECO:0007669"/>
    <property type="project" value="InterPro"/>
</dbReference>
<dbReference type="GO" id="GO:0050136">
    <property type="term" value="F:NADH:ubiquinone reductase (non-electrogenic) activity"/>
    <property type="evidence" value="ECO:0007669"/>
    <property type="project" value="UniProtKB-UniRule"/>
</dbReference>
<dbReference type="GO" id="GO:0048038">
    <property type="term" value="F:quinone binding"/>
    <property type="evidence" value="ECO:0007669"/>
    <property type="project" value="UniProtKB-KW"/>
</dbReference>
<dbReference type="GO" id="GO:0009060">
    <property type="term" value="P:aerobic respiration"/>
    <property type="evidence" value="ECO:0007669"/>
    <property type="project" value="TreeGrafter"/>
</dbReference>
<dbReference type="GO" id="GO:0015990">
    <property type="term" value="P:electron transport coupled proton transport"/>
    <property type="evidence" value="ECO:0007669"/>
    <property type="project" value="TreeGrafter"/>
</dbReference>
<dbReference type="FunFam" id="3.40.50.12280:FF:000002">
    <property type="entry name" value="NADH-quinone oxidoreductase subunit B"/>
    <property type="match status" value="1"/>
</dbReference>
<dbReference type="Gene3D" id="3.40.50.12280">
    <property type="match status" value="1"/>
</dbReference>
<dbReference type="HAMAP" id="MF_01356">
    <property type="entry name" value="NDH1_NuoB"/>
    <property type="match status" value="1"/>
</dbReference>
<dbReference type="InterPro" id="IPR006137">
    <property type="entry name" value="NADH_UbQ_OxRdtase-like_20kDa"/>
</dbReference>
<dbReference type="InterPro" id="IPR006138">
    <property type="entry name" value="NADH_UQ_OxRdtase_20Kd_su"/>
</dbReference>
<dbReference type="NCBIfam" id="TIGR01957">
    <property type="entry name" value="nuoB_fam"/>
    <property type="match status" value="1"/>
</dbReference>
<dbReference type="NCBIfam" id="NF005012">
    <property type="entry name" value="PRK06411.1"/>
    <property type="match status" value="1"/>
</dbReference>
<dbReference type="PANTHER" id="PTHR11995">
    <property type="entry name" value="NADH DEHYDROGENASE"/>
    <property type="match status" value="1"/>
</dbReference>
<dbReference type="PANTHER" id="PTHR11995:SF14">
    <property type="entry name" value="NADH DEHYDROGENASE [UBIQUINONE] IRON-SULFUR PROTEIN 7, MITOCHONDRIAL"/>
    <property type="match status" value="1"/>
</dbReference>
<dbReference type="Pfam" id="PF01058">
    <property type="entry name" value="Oxidored_q6"/>
    <property type="match status" value="1"/>
</dbReference>
<dbReference type="SUPFAM" id="SSF56770">
    <property type="entry name" value="HydA/Nqo6-like"/>
    <property type="match status" value="1"/>
</dbReference>
<dbReference type="PROSITE" id="PS01150">
    <property type="entry name" value="COMPLEX1_20K"/>
    <property type="match status" value="1"/>
</dbReference>
<accession>B1KJU9</accession>
<protein>
    <recommendedName>
        <fullName evidence="1">NADH-quinone oxidoreductase subunit B</fullName>
        <ecNumber evidence="1">7.1.1.-</ecNumber>
    </recommendedName>
    <alternativeName>
        <fullName evidence="1">NADH dehydrogenase I subunit B</fullName>
    </alternativeName>
    <alternativeName>
        <fullName evidence="1">NDH-1 subunit B</fullName>
    </alternativeName>
</protein>